<sequence length="286" mass="31388">MGQKIHPTGFRLSVLKNWSSKWYANGKSFPGMLNEDIKVREYLKKKLAHASVGRVVIERPSKNARITIYSSRPGVVIGKKGEDIEVLRGALQKLMGVPVHVNIEEIRKPEIDAQLIADNIAQQLEKRIMFRRAMKRAMQNAMRLGAQGIKIMSSGRLNGIEIARTEWYREGRVPLHTLRADLDYGVSEAKTTYGVIGIKVWVFKGEVIGRGEQAGAGTAAPQVLPPAGEPETRRPPRRPAGRADARSDGKAGEKKGPRKSDNSSEESATKPAKKPVKPGVNDAAAS</sequence>
<organism>
    <name type="scientific">Nitrosospira multiformis (strain ATCC 25196 / NCIMB 11849 / C 71)</name>
    <dbReference type="NCBI Taxonomy" id="323848"/>
    <lineage>
        <taxon>Bacteria</taxon>
        <taxon>Pseudomonadati</taxon>
        <taxon>Pseudomonadota</taxon>
        <taxon>Betaproteobacteria</taxon>
        <taxon>Nitrosomonadales</taxon>
        <taxon>Nitrosomonadaceae</taxon>
        <taxon>Nitrosospira</taxon>
    </lineage>
</organism>
<accession>Q2YAZ1</accession>
<name>RS3_NITMU</name>
<protein>
    <recommendedName>
        <fullName evidence="1">Small ribosomal subunit protein uS3</fullName>
    </recommendedName>
    <alternativeName>
        <fullName evidence="3">30S ribosomal protein S3</fullName>
    </alternativeName>
</protein>
<proteinExistence type="inferred from homology"/>
<gene>
    <name evidence="1" type="primary">rpsC</name>
    <name type="ordered locus">Nmul_A0773</name>
</gene>
<keyword id="KW-1185">Reference proteome</keyword>
<keyword id="KW-0687">Ribonucleoprotein</keyword>
<keyword id="KW-0689">Ribosomal protein</keyword>
<keyword id="KW-0694">RNA-binding</keyword>
<keyword id="KW-0699">rRNA-binding</keyword>
<dbReference type="EMBL" id="CP000103">
    <property type="protein sequence ID" value="ABB74080.1"/>
    <property type="molecule type" value="Genomic_DNA"/>
</dbReference>
<dbReference type="RefSeq" id="WP_011380129.1">
    <property type="nucleotide sequence ID" value="NC_007614.1"/>
</dbReference>
<dbReference type="SMR" id="Q2YAZ1"/>
<dbReference type="STRING" id="323848.Nmul_A0773"/>
<dbReference type="KEGG" id="nmu:Nmul_A0773"/>
<dbReference type="eggNOG" id="COG0092">
    <property type="taxonomic scope" value="Bacteria"/>
</dbReference>
<dbReference type="HOGENOM" id="CLU_058591_0_2_4"/>
<dbReference type="OrthoDB" id="9806396at2"/>
<dbReference type="Proteomes" id="UP000002718">
    <property type="component" value="Chromosome"/>
</dbReference>
<dbReference type="GO" id="GO:0022627">
    <property type="term" value="C:cytosolic small ribosomal subunit"/>
    <property type="evidence" value="ECO:0007669"/>
    <property type="project" value="TreeGrafter"/>
</dbReference>
<dbReference type="GO" id="GO:0003729">
    <property type="term" value="F:mRNA binding"/>
    <property type="evidence" value="ECO:0007669"/>
    <property type="project" value="UniProtKB-UniRule"/>
</dbReference>
<dbReference type="GO" id="GO:0019843">
    <property type="term" value="F:rRNA binding"/>
    <property type="evidence" value="ECO:0007669"/>
    <property type="project" value="UniProtKB-UniRule"/>
</dbReference>
<dbReference type="GO" id="GO:0003735">
    <property type="term" value="F:structural constituent of ribosome"/>
    <property type="evidence" value="ECO:0007669"/>
    <property type="project" value="InterPro"/>
</dbReference>
<dbReference type="GO" id="GO:0006412">
    <property type="term" value="P:translation"/>
    <property type="evidence" value="ECO:0007669"/>
    <property type="project" value="UniProtKB-UniRule"/>
</dbReference>
<dbReference type="CDD" id="cd02412">
    <property type="entry name" value="KH-II_30S_S3"/>
    <property type="match status" value="1"/>
</dbReference>
<dbReference type="FunFam" id="3.30.1140.32:FF:000001">
    <property type="entry name" value="30S ribosomal protein S3"/>
    <property type="match status" value="1"/>
</dbReference>
<dbReference type="FunFam" id="3.30.300.20:FF:000001">
    <property type="entry name" value="30S ribosomal protein S3"/>
    <property type="match status" value="1"/>
</dbReference>
<dbReference type="Gene3D" id="3.30.300.20">
    <property type="match status" value="1"/>
</dbReference>
<dbReference type="Gene3D" id="3.30.1140.32">
    <property type="entry name" value="Ribosomal protein S3, C-terminal domain"/>
    <property type="match status" value="1"/>
</dbReference>
<dbReference type="HAMAP" id="MF_01309_B">
    <property type="entry name" value="Ribosomal_uS3_B"/>
    <property type="match status" value="1"/>
</dbReference>
<dbReference type="InterPro" id="IPR004087">
    <property type="entry name" value="KH_dom"/>
</dbReference>
<dbReference type="InterPro" id="IPR015946">
    <property type="entry name" value="KH_dom-like_a/b"/>
</dbReference>
<dbReference type="InterPro" id="IPR004044">
    <property type="entry name" value="KH_dom_type_2"/>
</dbReference>
<dbReference type="InterPro" id="IPR009019">
    <property type="entry name" value="KH_sf_prok-type"/>
</dbReference>
<dbReference type="InterPro" id="IPR036419">
    <property type="entry name" value="Ribosomal_S3_C_sf"/>
</dbReference>
<dbReference type="InterPro" id="IPR005704">
    <property type="entry name" value="Ribosomal_uS3_bac-typ"/>
</dbReference>
<dbReference type="InterPro" id="IPR001351">
    <property type="entry name" value="Ribosomal_uS3_C"/>
</dbReference>
<dbReference type="InterPro" id="IPR018280">
    <property type="entry name" value="Ribosomal_uS3_CS"/>
</dbReference>
<dbReference type="NCBIfam" id="TIGR01009">
    <property type="entry name" value="rpsC_bact"/>
    <property type="match status" value="1"/>
</dbReference>
<dbReference type="PANTHER" id="PTHR11760">
    <property type="entry name" value="30S/40S RIBOSOMAL PROTEIN S3"/>
    <property type="match status" value="1"/>
</dbReference>
<dbReference type="PANTHER" id="PTHR11760:SF19">
    <property type="entry name" value="SMALL RIBOSOMAL SUBUNIT PROTEIN US3C"/>
    <property type="match status" value="1"/>
</dbReference>
<dbReference type="Pfam" id="PF07650">
    <property type="entry name" value="KH_2"/>
    <property type="match status" value="1"/>
</dbReference>
<dbReference type="Pfam" id="PF00189">
    <property type="entry name" value="Ribosomal_S3_C"/>
    <property type="match status" value="1"/>
</dbReference>
<dbReference type="SMART" id="SM00322">
    <property type="entry name" value="KH"/>
    <property type="match status" value="1"/>
</dbReference>
<dbReference type="SUPFAM" id="SSF54814">
    <property type="entry name" value="Prokaryotic type KH domain (KH-domain type II)"/>
    <property type="match status" value="1"/>
</dbReference>
<dbReference type="SUPFAM" id="SSF54821">
    <property type="entry name" value="Ribosomal protein S3 C-terminal domain"/>
    <property type="match status" value="1"/>
</dbReference>
<dbReference type="PROSITE" id="PS50823">
    <property type="entry name" value="KH_TYPE_2"/>
    <property type="match status" value="1"/>
</dbReference>
<dbReference type="PROSITE" id="PS00548">
    <property type="entry name" value="RIBOSOMAL_S3"/>
    <property type="match status" value="1"/>
</dbReference>
<reference key="1">
    <citation type="submission" date="2005-08" db="EMBL/GenBank/DDBJ databases">
        <title>Complete sequence of chromosome 1 of Nitrosospira multiformis ATCC 25196.</title>
        <authorList>
            <person name="Copeland A."/>
            <person name="Lucas S."/>
            <person name="Lapidus A."/>
            <person name="Barry K."/>
            <person name="Detter J.C."/>
            <person name="Glavina T."/>
            <person name="Hammon N."/>
            <person name="Israni S."/>
            <person name="Pitluck S."/>
            <person name="Chain P."/>
            <person name="Malfatti S."/>
            <person name="Shin M."/>
            <person name="Vergez L."/>
            <person name="Schmutz J."/>
            <person name="Larimer F."/>
            <person name="Land M."/>
            <person name="Hauser L."/>
            <person name="Kyrpides N."/>
            <person name="Lykidis A."/>
            <person name="Richardson P."/>
        </authorList>
    </citation>
    <scope>NUCLEOTIDE SEQUENCE [LARGE SCALE GENOMIC DNA]</scope>
    <source>
        <strain>ATCC 25196 / NCIMB 11849 / C 71</strain>
    </source>
</reference>
<comment type="function">
    <text evidence="1">Binds the lower part of the 30S subunit head. Binds mRNA in the 70S ribosome, positioning it for translation.</text>
</comment>
<comment type="subunit">
    <text evidence="1">Part of the 30S ribosomal subunit. Forms a tight complex with proteins S10 and S14.</text>
</comment>
<comment type="similarity">
    <text evidence="1">Belongs to the universal ribosomal protein uS3 family.</text>
</comment>
<evidence type="ECO:0000255" key="1">
    <source>
        <dbReference type="HAMAP-Rule" id="MF_01309"/>
    </source>
</evidence>
<evidence type="ECO:0000256" key="2">
    <source>
        <dbReference type="SAM" id="MobiDB-lite"/>
    </source>
</evidence>
<evidence type="ECO:0000305" key="3"/>
<feature type="chain" id="PRO_0000230709" description="Small ribosomal subunit protein uS3">
    <location>
        <begin position="1"/>
        <end position="286"/>
    </location>
</feature>
<feature type="domain" description="KH type-2" evidence="1">
    <location>
        <begin position="39"/>
        <end position="107"/>
    </location>
</feature>
<feature type="region of interest" description="Disordered" evidence="2">
    <location>
        <begin position="213"/>
        <end position="286"/>
    </location>
</feature>
<feature type="compositionally biased region" description="Basic and acidic residues" evidence="2">
    <location>
        <begin position="241"/>
        <end position="262"/>
    </location>
</feature>